<dbReference type="EC" id="2.7.7.7"/>
<dbReference type="EMBL" id="AL111168">
    <property type="protein sequence ID" value="CAL34855.1"/>
    <property type="molecule type" value="Genomic_DNA"/>
</dbReference>
<dbReference type="PIR" id="A81343">
    <property type="entry name" value="A81343"/>
</dbReference>
<dbReference type="RefSeq" id="WP_002852165.1">
    <property type="nucleotide sequence ID" value="NZ_SZUC01000002.1"/>
</dbReference>
<dbReference type="RefSeq" id="YP_002344136.1">
    <property type="nucleotide sequence ID" value="NC_002163.1"/>
</dbReference>
<dbReference type="SMR" id="Q9PPI9"/>
<dbReference type="IntAct" id="Q9PPI9">
    <property type="interactions" value="2"/>
</dbReference>
<dbReference type="STRING" id="192222.Cj0718"/>
<dbReference type="PaxDb" id="192222-Cj0718"/>
<dbReference type="EnsemblBacteria" id="CAL34855">
    <property type="protein sequence ID" value="CAL34855"/>
    <property type="gene ID" value="Cj0718"/>
</dbReference>
<dbReference type="GeneID" id="905036"/>
<dbReference type="KEGG" id="cje:Cj0718"/>
<dbReference type="PATRIC" id="fig|192222.6.peg.710"/>
<dbReference type="eggNOG" id="COG0587">
    <property type="taxonomic scope" value="Bacteria"/>
</dbReference>
<dbReference type="HOGENOM" id="CLU_001600_0_0_7"/>
<dbReference type="OrthoDB" id="9803237at2"/>
<dbReference type="Proteomes" id="UP000000799">
    <property type="component" value="Chromosome"/>
</dbReference>
<dbReference type="GO" id="GO:0005737">
    <property type="term" value="C:cytoplasm"/>
    <property type="evidence" value="ECO:0007669"/>
    <property type="project" value="UniProtKB-SubCell"/>
</dbReference>
<dbReference type="GO" id="GO:0008408">
    <property type="term" value="F:3'-5' exonuclease activity"/>
    <property type="evidence" value="ECO:0007669"/>
    <property type="project" value="InterPro"/>
</dbReference>
<dbReference type="GO" id="GO:0003887">
    <property type="term" value="F:DNA-directed DNA polymerase activity"/>
    <property type="evidence" value="ECO:0007669"/>
    <property type="project" value="UniProtKB-KW"/>
</dbReference>
<dbReference type="GO" id="GO:0006260">
    <property type="term" value="P:DNA replication"/>
    <property type="evidence" value="ECO:0007669"/>
    <property type="project" value="UniProtKB-KW"/>
</dbReference>
<dbReference type="CDD" id="cd04485">
    <property type="entry name" value="DnaE_OBF"/>
    <property type="match status" value="1"/>
</dbReference>
<dbReference type="CDD" id="cd12113">
    <property type="entry name" value="PHP_PolIIIA_DnaE3"/>
    <property type="match status" value="1"/>
</dbReference>
<dbReference type="Gene3D" id="1.10.150.870">
    <property type="match status" value="1"/>
</dbReference>
<dbReference type="Gene3D" id="1.10.10.1600">
    <property type="entry name" value="Bacterial DNA polymerase III alpha subunit, thumb domain"/>
    <property type="match status" value="1"/>
</dbReference>
<dbReference type="Gene3D" id="3.20.20.140">
    <property type="entry name" value="Metal-dependent hydrolases"/>
    <property type="match status" value="1"/>
</dbReference>
<dbReference type="InterPro" id="IPR011708">
    <property type="entry name" value="DNA_pol3_alpha_NTPase_dom"/>
</dbReference>
<dbReference type="InterPro" id="IPR041931">
    <property type="entry name" value="DNA_pol3_alpha_thumb_dom"/>
</dbReference>
<dbReference type="InterPro" id="IPR040982">
    <property type="entry name" value="DNA_pol3_finger"/>
</dbReference>
<dbReference type="InterPro" id="IPR004805">
    <property type="entry name" value="DnaE2/DnaE/PolC"/>
</dbReference>
<dbReference type="InterPro" id="IPR029460">
    <property type="entry name" value="DNAPol_HHH"/>
</dbReference>
<dbReference type="InterPro" id="IPR004013">
    <property type="entry name" value="PHP_dom"/>
</dbReference>
<dbReference type="InterPro" id="IPR003141">
    <property type="entry name" value="Pol/His_phosphatase_N"/>
</dbReference>
<dbReference type="InterPro" id="IPR016195">
    <property type="entry name" value="Pol/histidinol_Pase-like"/>
</dbReference>
<dbReference type="NCBIfam" id="TIGR00594">
    <property type="entry name" value="polc"/>
    <property type="match status" value="1"/>
</dbReference>
<dbReference type="NCBIfam" id="NF004226">
    <property type="entry name" value="PRK05673.1"/>
    <property type="match status" value="1"/>
</dbReference>
<dbReference type="PANTHER" id="PTHR32294">
    <property type="entry name" value="DNA POLYMERASE III SUBUNIT ALPHA"/>
    <property type="match status" value="1"/>
</dbReference>
<dbReference type="PANTHER" id="PTHR32294:SF0">
    <property type="entry name" value="DNA POLYMERASE III SUBUNIT ALPHA"/>
    <property type="match status" value="1"/>
</dbReference>
<dbReference type="Pfam" id="PF07733">
    <property type="entry name" value="DNA_pol3_alpha"/>
    <property type="match status" value="1"/>
</dbReference>
<dbReference type="Pfam" id="PF17657">
    <property type="entry name" value="DNA_pol3_finger"/>
    <property type="match status" value="1"/>
</dbReference>
<dbReference type="Pfam" id="PF14579">
    <property type="entry name" value="HHH_6"/>
    <property type="match status" value="1"/>
</dbReference>
<dbReference type="Pfam" id="PF02811">
    <property type="entry name" value="PHP"/>
    <property type="match status" value="1"/>
</dbReference>
<dbReference type="SMART" id="SM00481">
    <property type="entry name" value="POLIIIAc"/>
    <property type="match status" value="1"/>
</dbReference>
<dbReference type="SUPFAM" id="SSF89550">
    <property type="entry name" value="PHP domain-like"/>
    <property type="match status" value="1"/>
</dbReference>
<comment type="function">
    <text evidence="1">DNA polymerase III is a complex, multichain enzyme responsible for most of the replicative synthesis in bacteria. This DNA polymerase also exhibits 3' to 5' exonuclease activity. The alpha chain is the DNA polymerase (By similarity).</text>
</comment>
<comment type="catalytic activity">
    <reaction>
        <text>DNA(n) + a 2'-deoxyribonucleoside 5'-triphosphate = DNA(n+1) + diphosphate</text>
        <dbReference type="Rhea" id="RHEA:22508"/>
        <dbReference type="Rhea" id="RHEA-COMP:17339"/>
        <dbReference type="Rhea" id="RHEA-COMP:17340"/>
        <dbReference type="ChEBI" id="CHEBI:33019"/>
        <dbReference type="ChEBI" id="CHEBI:61560"/>
        <dbReference type="ChEBI" id="CHEBI:173112"/>
        <dbReference type="EC" id="2.7.7.7"/>
    </reaction>
</comment>
<comment type="subunit">
    <text evidence="1">DNA polymerase III contains a core (composed of alpha, epsilon and theta chains) that associates with a tau subunit. This core dimerizes to form the PolIII' complex. PolIII' associates with the gamma complex (composed of gamma, delta, delta', psi and chi chains) and with the beta chain to form the complete DNA polymerase III complex (By similarity).</text>
</comment>
<comment type="subcellular location">
    <subcellularLocation>
        <location evidence="1">Cytoplasm</location>
    </subcellularLocation>
</comment>
<comment type="similarity">
    <text evidence="2">Belongs to the DNA polymerase type-C family. DnaE subfamily.</text>
</comment>
<gene>
    <name type="primary">dnaE</name>
    <name type="ordered locus">Cj0718</name>
</gene>
<evidence type="ECO:0000250" key="1"/>
<evidence type="ECO:0000305" key="2"/>
<accession>Q9PPI9</accession>
<accession>Q0PAG1</accession>
<feature type="chain" id="PRO_0000103315" description="DNA polymerase III subunit alpha">
    <location>
        <begin position="1"/>
        <end position="1200"/>
    </location>
</feature>
<name>DPO3A_CAMJE</name>
<keyword id="KW-0963">Cytoplasm</keyword>
<keyword id="KW-0235">DNA replication</keyword>
<keyword id="KW-0239">DNA-directed DNA polymerase</keyword>
<keyword id="KW-0548">Nucleotidyltransferase</keyword>
<keyword id="KW-1185">Reference proteome</keyword>
<keyword id="KW-0808">Transferase</keyword>
<organism>
    <name type="scientific">Campylobacter jejuni subsp. jejuni serotype O:2 (strain ATCC 700819 / NCTC 11168)</name>
    <dbReference type="NCBI Taxonomy" id="192222"/>
    <lineage>
        <taxon>Bacteria</taxon>
        <taxon>Pseudomonadati</taxon>
        <taxon>Campylobacterota</taxon>
        <taxon>Epsilonproteobacteria</taxon>
        <taxon>Campylobacterales</taxon>
        <taxon>Campylobacteraceae</taxon>
        <taxon>Campylobacter</taxon>
    </lineage>
</organism>
<proteinExistence type="inferred from homology"/>
<reference key="1">
    <citation type="journal article" date="2000" name="Nature">
        <title>The genome sequence of the food-borne pathogen Campylobacter jejuni reveals hypervariable sequences.</title>
        <authorList>
            <person name="Parkhill J."/>
            <person name="Wren B.W."/>
            <person name="Mungall K.L."/>
            <person name="Ketley J.M."/>
            <person name="Churcher C.M."/>
            <person name="Basham D."/>
            <person name="Chillingworth T."/>
            <person name="Davies R.M."/>
            <person name="Feltwell T."/>
            <person name="Holroyd S."/>
            <person name="Jagels K."/>
            <person name="Karlyshev A.V."/>
            <person name="Moule S."/>
            <person name="Pallen M.J."/>
            <person name="Penn C.W."/>
            <person name="Quail M.A."/>
            <person name="Rajandream M.A."/>
            <person name="Rutherford K.M."/>
            <person name="van Vliet A.H.M."/>
            <person name="Whitehead S."/>
            <person name="Barrell B.G."/>
        </authorList>
    </citation>
    <scope>NUCLEOTIDE SEQUENCE [LARGE SCALE GENOMIC DNA]</scope>
    <source>
        <strain>ATCC 700819 / NCTC 11168</strain>
    </source>
</reference>
<protein>
    <recommendedName>
        <fullName>DNA polymerase III subunit alpha</fullName>
        <ecNumber>2.7.7.7</ecNumber>
    </recommendedName>
</protein>
<sequence>MSQFTHLHLHTEYSLLDGANKLKELALTLKEQGATSVAMTDHGNMFGAIDFYQTMKAQGLKPIIGIEAYLHNHDELDDKSSRQRFHLCLYAKNEIGYQNLMYLSSQSYIKGLYYYPRINKKLLEDYSEGLICSSACLQGEVNWHLNTYSERNVRFGAKGYEAAKEAALWYKKVFKDDFYFEIMRHGIGDQRMIDDDIIRLSKELNIKIIATNDTHYTFKERAAAHEVFMCIAMGKKLNDPDRMRHSVHEFYVKSPEQMSELFADIPEAIENTQEIAQKCNLELNLGNPTPPNFKFTREYAKDHNIILPEETKEFSFDNDDMVFEELCKKGLEERLKFIDESKHEEYKQRLEVEINIIKNMKFSGYMLIVHDFIKVAKDKGIPVGPGRGSAAGSLVSYCLRITDLDPIPYSLLFERFLNPERVSMPDIDVDFCQDRRAEVIDYVIDKYGADKVAQVITFGKLLAKGVIRDVARVCDMSIQDADELAKLVPEELKITLDAAYEKEPKIKEFIDRHPKGLEVWEYARALEGLNRNAGMHAAGVVISNESLWKKTPLFRQSKNDERHLVTQYSKDHLEDVDLIKFDFLGLKTLTVINNAIKLIKKRYNKDIIWETIDVNDSKVYKTIQSGNTLGIFQIESGGMQSLNARLKPERFEDIIAVLALYRPGPMESGMLDDFIDRKHGLKSIEYPFDSLEKVLEPTYGVIVYQEQVMQIVQIIGGFSLGGADVVRRAMGKKDPEKMKKLKTDFADGAEKQGYDRAKAEDLWELIVKFAGYGFNKSHSAAYALITFQTAYLKTYYPSEFMAALLTSEENNVDKIAVYIDEMKKMNIKLLPPSINKAIREFSALEQDGKDAIIYGLGAIKSVGIPAVENLLEARQDGEFKDINDFLGKIDPTKINRRTLESLIKAGAFDEFGFTRKALFDNMENLSEASRKMAEVRKNAASSLFGEEELTSGVQVNFTPKNEEFEVMEKLGYEKEILGIYVSGHPLDRFYEQINAIDYVKSLDFESLKNNGEILSIGKIEDFKSMMSKNNKRYGRIEILDYYSSFDATVFESNVEEIENIIKDENLKNNAYGFVLGFKAEGGEKPSFFLKAIKDLQSLEDGEIKAIKKFGAKKDFKNKEENHFTAEPKEFEKNIIELDLTRLNRELIYEIHEIARNAHNPNEKNNKKLVLKVISAGSCLLYHTDFIISDSIVEEISNKYA</sequence>